<organism>
    <name type="scientific">Streptomyces griseus subsp. griseus (strain JCM 4626 / CBS 651.72 / NBRC 13350 / KCC S-0626 / ISP 5235)</name>
    <dbReference type="NCBI Taxonomy" id="455632"/>
    <lineage>
        <taxon>Bacteria</taxon>
        <taxon>Bacillati</taxon>
        <taxon>Actinomycetota</taxon>
        <taxon>Actinomycetes</taxon>
        <taxon>Kitasatosporales</taxon>
        <taxon>Streptomycetaceae</taxon>
        <taxon>Streptomyces</taxon>
    </lineage>
</organism>
<comment type="catalytic activity">
    <reaction evidence="1">
        <text>1-(2-carboxyphenylamino)-1-deoxy-D-ribulose 5-phosphate + H(+) = (1S,2R)-1-C-(indol-3-yl)glycerol 3-phosphate + CO2 + H2O</text>
        <dbReference type="Rhea" id="RHEA:23476"/>
        <dbReference type="ChEBI" id="CHEBI:15377"/>
        <dbReference type="ChEBI" id="CHEBI:15378"/>
        <dbReference type="ChEBI" id="CHEBI:16526"/>
        <dbReference type="ChEBI" id="CHEBI:58613"/>
        <dbReference type="ChEBI" id="CHEBI:58866"/>
        <dbReference type="EC" id="4.1.1.48"/>
    </reaction>
</comment>
<comment type="pathway">
    <text evidence="1">Amino-acid biosynthesis; L-tryptophan biosynthesis; L-tryptophan from chorismate: step 4/5.</text>
</comment>
<comment type="similarity">
    <text evidence="1">Belongs to the TrpC family.</text>
</comment>
<accession>B1W0N8</accession>
<reference key="1">
    <citation type="journal article" date="2008" name="J. Bacteriol.">
        <title>Genome sequence of the streptomycin-producing microorganism Streptomyces griseus IFO 13350.</title>
        <authorList>
            <person name="Ohnishi Y."/>
            <person name="Ishikawa J."/>
            <person name="Hara H."/>
            <person name="Suzuki H."/>
            <person name="Ikenoya M."/>
            <person name="Ikeda H."/>
            <person name="Yamashita A."/>
            <person name="Hattori M."/>
            <person name="Horinouchi S."/>
        </authorList>
    </citation>
    <scope>NUCLEOTIDE SEQUENCE [LARGE SCALE GENOMIC DNA]</scope>
    <source>
        <strain>JCM 4626 / CBS 651.72 / NBRC 13350 / KCC S-0626 / ISP 5235</strain>
    </source>
</reference>
<sequence length="269" mass="28269">MSVLDEIIDGVRADLAERQARVSLDELKERAARAPQAKDGVAALRGEGVTVICEVKRSSPSKGALAAIADPAALAADYEAGGASVISVLTEERRFGGSLADLEAVRAKVDIPILRKDFIVTSYQLWEARAYGADLALLIVAALDQEALVSLIERAESIGLTPLVEAHDEEEAERAVDAGAKIIGVNARNLKDLKVDRSTFERVAPEIPDHIVKVAESGVRGPHDLIAYANAGADAVLVGESLVTGRDPRAAVADLVAAGAHPALRHGRG</sequence>
<protein>
    <recommendedName>
        <fullName evidence="1">Indole-3-glycerol phosphate synthase</fullName>
        <shortName evidence="1">IGPS</shortName>
        <ecNumber evidence="1">4.1.1.48</ecNumber>
    </recommendedName>
</protein>
<proteinExistence type="inferred from homology"/>
<evidence type="ECO:0000255" key="1">
    <source>
        <dbReference type="HAMAP-Rule" id="MF_00134"/>
    </source>
</evidence>
<gene>
    <name evidence="1" type="primary">trpC</name>
    <name type="ordered locus">SGR_5469</name>
</gene>
<dbReference type="EC" id="4.1.1.48" evidence="1"/>
<dbReference type="EMBL" id="AP009493">
    <property type="protein sequence ID" value="BAG22298.1"/>
    <property type="molecule type" value="Genomic_DNA"/>
</dbReference>
<dbReference type="RefSeq" id="WP_003969760.1">
    <property type="nucleotide sequence ID" value="NC_010572.1"/>
</dbReference>
<dbReference type="SMR" id="B1W0N8"/>
<dbReference type="KEGG" id="sgr:SGR_5469"/>
<dbReference type="eggNOG" id="COG0134">
    <property type="taxonomic scope" value="Bacteria"/>
</dbReference>
<dbReference type="HOGENOM" id="CLU_034247_0_0_11"/>
<dbReference type="UniPathway" id="UPA00035">
    <property type="reaction ID" value="UER00043"/>
</dbReference>
<dbReference type="Proteomes" id="UP000001685">
    <property type="component" value="Chromosome"/>
</dbReference>
<dbReference type="GO" id="GO:0004425">
    <property type="term" value="F:indole-3-glycerol-phosphate synthase activity"/>
    <property type="evidence" value="ECO:0007669"/>
    <property type="project" value="UniProtKB-UniRule"/>
</dbReference>
<dbReference type="GO" id="GO:0004640">
    <property type="term" value="F:phosphoribosylanthranilate isomerase activity"/>
    <property type="evidence" value="ECO:0007669"/>
    <property type="project" value="TreeGrafter"/>
</dbReference>
<dbReference type="GO" id="GO:0000162">
    <property type="term" value="P:L-tryptophan biosynthetic process"/>
    <property type="evidence" value="ECO:0007669"/>
    <property type="project" value="UniProtKB-UniRule"/>
</dbReference>
<dbReference type="CDD" id="cd00331">
    <property type="entry name" value="IGPS"/>
    <property type="match status" value="1"/>
</dbReference>
<dbReference type="FunFam" id="3.20.20.70:FF:000024">
    <property type="entry name" value="Indole-3-glycerol phosphate synthase"/>
    <property type="match status" value="1"/>
</dbReference>
<dbReference type="Gene3D" id="3.20.20.70">
    <property type="entry name" value="Aldolase class I"/>
    <property type="match status" value="1"/>
</dbReference>
<dbReference type="HAMAP" id="MF_00134_A">
    <property type="entry name" value="IGPS_A"/>
    <property type="match status" value="1"/>
</dbReference>
<dbReference type="HAMAP" id="MF_00134_B">
    <property type="entry name" value="IGPS_B"/>
    <property type="match status" value="1"/>
</dbReference>
<dbReference type="InterPro" id="IPR013785">
    <property type="entry name" value="Aldolase_TIM"/>
</dbReference>
<dbReference type="InterPro" id="IPR045186">
    <property type="entry name" value="Indole-3-glycerol_P_synth"/>
</dbReference>
<dbReference type="InterPro" id="IPR013798">
    <property type="entry name" value="Indole-3-glycerol_P_synth_dom"/>
</dbReference>
<dbReference type="InterPro" id="IPR001468">
    <property type="entry name" value="Indole-3-GlycerolPSynthase_CS"/>
</dbReference>
<dbReference type="InterPro" id="IPR011060">
    <property type="entry name" value="RibuloseP-bd_barrel"/>
</dbReference>
<dbReference type="NCBIfam" id="NF001369">
    <property type="entry name" value="PRK00278.1-1"/>
    <property type="match status" value="1"/>
</dbReference>
<dbReference type="NCBIfam" id="NF001377">
    <property type="entry name" value="PRK00278.2-4"/>
    <property type="match status" value="1"/>
</dbReference>
<dbReference type="PANTHER" id="PTHR22854:SF2">
    <property type="entry name" value="INDOLE-3-GLYCEROL-PHOSPHATE SYNTHASE"/>
    <property type="match status" value="1"/>
</dbReference>
<dbReference type="PANTHER" id="PTHR22854">
    <property type="entry name" value="TRYPTOPHAN BIOSYNTHESIS PROTEIN"/>
    <property type="match status" value="1"/>
</dbReference>
<dbReference type="Pfam" id="PF00218">
    <property type="entry name" value="IGPS"/>
    <property type="match status" value="1"/>
</dbReference>
<dbReference type="SUPFAM" id="SSF51366">
    <property type="entry name" value="Ribulose-phoshate binding barrel"/>
    <property type="match status" value="1"/>
</dbReference>
<dbReference type="PROSITE" id="PS00614">
    <property type="entry name" value="IGPS"/>
    <property type="match status" value="1"/>
</dbReference>
<name>TRPC_STRGG</name>
<keyword id="KW-0028">Amino-acid biosynthesis</keyword>
<keyword id="KW-0057">Aromatic amino acid biosynthesis</keyword>
<keyword id="KW-0210">Decarboxylase</keyword>
<keyword id="KW-0456">Lyase</keyword>
<keyword id="KW-0822">Tryptophan biosynthesis</keyword>
<feature type="chain" id="PRO_1000095894" description="Indole-3-glycerol phosphate synthase">
    <location>
        <begin position="1"/>
        <end position="269"/>
    </location>
</feature>